<evidence type="ECO:0000255" key="1">
    <source>
        <dbReference type="HAMAP-Rule" id="MF_01011"/>
    </source>
</evidence>
<protein>
    <recommendedName>
        <fullName evidence="1">tRNA/tmRNA (uracil-C(5))-methyltransferase</fullName>
        <ecNumber evidence="1">2.1.1.-</ecNumber>
        <ecNumber evidence="1">2.1.1.35</ecNumber>
    </recommendedName>
    <alternativeName>
        <fullName evidence="1">tRNA (uracil(54)-C(5))-methyltransferase</fullName>
    </alternativeName>
    <alternativeName>
        <fullName evidence="1">tRNA(m5U54)-methyltransferase</fullName>
        <shortName evidence="1">RUMT</shortName>
    </alternativeName>
    <alternativeName>
        <fullName evidence="1">tmRNA (uracil(341)-C(5))-methyltransferase</fullName>
    </alternativeName>
</protein>
<feature type="chain" id="PRO_0000388564" description="tRNA/tmRNA (uracil-C(5))-methyltransferase">
    <location>
        <begin position="1"/>
        <end position="365"/>
    </location>
</feature>
<feature type="active site" description="Nucleophile" evidence="1">
    <location>
        <position position="323"/>
    </location>
</feature>
<feature type="active site" description="Proton acceptor" evidence="1">
    <location>
        <position position="357"/>
    </location>
</feature>
<feature type="binding site" evidence="1">
    <location>
        <position position="189"/>
    </location>
    <ligand>
        <name>S-adenosyl-L-methionine</name>
        <dbReference type="ChEBI" id="CHEBI:59789"/>
    </ligand>
</feature>
<feature type="binding site" evidence="1">
    <location>
        <position position="217"/>
    </location>
    <ligand>
        <name>S-adenosyl-L-methionine</name>
        <dbReference type="ChEBI" id="CHEBI:59789"/>
    </ligand>
</feature>
<feature type="binding site" evidence="1">
    <location>
        <position position="222"/>
    </location>
    <ligand>
        <name>S-adenosyl-L-methionine</name>
        <dbReference type="ChEBI" id="CHEBI:59789"/>
    </ligand>
</feature>
<feature type="binding site" evidence="1">
    <location>
        <position position="238"/>
    </location>
    <ligand>
        <name>S-adenosyl-L-methionine</name>
        <dbReference type="ChEBI" id="CHEBI:59789"/>
    </ligand>
</feature>
<feature type="binding site" evidence="1">
    <location>
        <position position="298"/>
    </location>
    <ligand>
        <name>S-adenosyl-L-methionine</name>
        <dbReference type="ChEBI" id="CHEBI:59789"/>
    </ligand>
</feature>
<sequence>MTLQFVDPENYETLLAAKKEHLNKQFAIFNPPALECFASPKLHYRMRAELRVWHDGDELYYIMFDKKTKQKFRVEQFPPASELINNLMPVLLELVKSSEILRYKLFQIDFLSNLKGQVIVSLLYHKQLDDNWLVEAKRIKAELLKQFDINFIGRARKQKILLDYDYVIEELQVDGNKLFYQQIENSFTQPNAKVCEKMLEWAIDCTRDSQGDLLELYCGNGNFSLALAKNFNKVLATEIAKPSVESAQFNMAQNGINNVTVIRMSAEEFTQAINGEREFYRLKEITLSDYQCNTILVDPPRSGLDDETVKMVQHYDNILYISCNADTLSRNLEVLSKTHEIKRFALFDQFPYTYHSEAGVYLVKR</sequence>
<accession>A1SSL6</accession>
<gene>
    <name evidence="1" type="primary">trmA</name>
    <name type="ordered locus">Ping_0628</name>
</gene>
<name>TRMA_PSYIN</name>
<organism>
    <name type="scientific">Psychromonas ingrahamii (strain DSM 17664 / CCUG 51855 / 37)</name>
    <dbReference type="NCBI Taxonomy" id="357804"/>
    <lineage>
        <taxon>Bacteria</taxon>
        <taxon>Pseudomonadati</taxon>
        <taxon>Pseudomonadota</taxon>
        <taxon>Gammaproteobacteria</taxon>
        <taxon>Alteromonadales</taxon>
        <taxon>Psychromonadaceae</taxon>
        <taxon>Psychromonas</taxon>
    </lineage>
</organism>
<dbReference type="EC" id="2.1.1.-" evidence="1"/>
<dbReference type="EC" id="2.1.1.35" evidence="1"/>
<dbReference type="EMBL" id="CP000510">
    <property type="protein sequence ID" value="ABM02481.1"/>
    <property type="molecule type" value="Genomic_DNA"/>
</dbReference>
<dbReference type="RefSeq" id="WP_011769040.1">
    <property type="nucleotide sequence ID" value="NC_008709.1"/>
</dbReference>
<dbReference type="SMR" id="A1SSL6"/>
<dbReference type="STRING" id="357804.Ping_0628"/>
<dbReference type="KEGG" id="pin:Ping_0628"/>
<dbReference type="eggNOG" id="COG2265">
    <property type="taxonomic scope" value="Bacteria"/>
</dbReference>
<dbReference type="HOGENOM" id="CLU_043022_0_0_6"/>
<dbReference type="OrthoDB" id="9804590at2"/>
<dbReference type="Proteomes" id="UP000000639">
    <property type="component" value="Chromosome"/>
</dbReference>
<dbReference type="GO" id="GO:0005829">
    <property type="term" value="C:cytosol"/>
    <property type="evidence" value="ECO:0007669"/>
    <property type="project" value="TreeGrafter"/>
</dbReference>
<dbReference type="GO" id="GO:0019843">
    <property type="term" value="F:rRNA binding"/>
    <property type="evidence" value="ECO:0007669"/>
    <property type="project" value="TreeGrafter"/>
</dbReference>
<dbReference type="GO" id="GO:0030697">
    <property type="term" value="F:tRNA (uracil(54)-C5)-methyltransferase activity, S-adenosyl methionine-dependent"/>
    <property type="evidence" value="ECO:0007669"/>
    <property type="project" value="UniProtKB-UniRule"/>
</dbReference>
<dbReference type="GO" id="GO:0000049">
    <property type="term" value="F:tRNA binding"/>
    <property type="evidence" value="ECO:0007669"/>
    <property type="project" value="TreeGrafter"/>
</dbReference>
<dbReference type="GO" id="GO:0030488">
    <property type="term" value="P:tRNA methylation"/>
    <property type="evidence" value="ECO:0007669"/>
    <property type="project" value="UniProtKB-UniRule"/>
</dbReference>
<dbReference type="CDD" id="cd02440">
    <property type="entry name" value="AdoMet_MTases"/>
    <property type="match status" value="1"/>
</dbReference>
<dbReference type="FunFam" id="2.40.50.1070:FF:000001">
    <property type="entry name" value="tRNA/tmRNA (uracil-C(5))-methyltransferase"/>
    <property type="match status" value="1"/>
</dbReference>
<dbReference type="FunFam" id="3.40.50.150:FF:000012">
    <property type="entry name" value="tRNA/tmRNA (uracil-C(5))-methyltransferase"/>
    <property type="match status" value="1"/>
</dbReference>
<dbReference type="Gene3D" id="2.40.50.1070">
    <property type="match status" value="1"/>
</dbReference>
<dbReference type="Gene3D" id="3.40.50.150">
    <property type="entry name" value="Vaccinia Virus protein VP39"/>
    <property type="match status" value="1"/>
</dbReference>
<dbReference type="HAMAP" id="MF_01011">
    <property type="entry name" value="RNA_methyltr_TrmA"/>
    <property type="match status" value="1"/>
</dbReference>
<dbReference type="InterPro" id="IPR030390">
    <property type="entry name" value="MeTrfase_TrmA_AS"/>
</dbReference>
<dbReference type="InterPro" id="IPR029063">
    <property type="entry name" value="SAM-dependent_MTases_sf"/>
</dbReference>
<dbReference type="InterPro" id="IPR011869">
    <property type="entry name" value="TrmA_MeTrfase"/>
</dbReference>
<dbReference type="InterPro" id="IPR010280">
    <property type="entry name" value="U5_MeTrfase_fam"/>
</dbReference>
<dbReference type="NCBIfam" id="TIGR02143">
    <property type="entry name" value="trmA_only"/>
    <property type="match status" value="1"/>
</dbReference>
<dbReference type="PANTHER" id="PTHR47790">
    <property type="entry name" value="TRNA/TMRNA (URACIL-C(5))-METHYLTRANSFERASE"/>
    <property type="match status" value="1"/>
</dbReference>
<dbReference type="PANTHER" id="PTHR47790:SF2">
    <property type="entry name" value="TRNA_TMRNA (URACIL-C(5))-METHYLTRANSFERASE"/>
    <property type="match status" value="1"/>
</dbReference>
<dbReference type="Pfam" id="PF05958">
    <property type="entry name" value="tRNA_U5-meth_tr"/>
    <property type="match status" value="1"/>
</dbReference>
<dbReference type="SUPFAM" id="SSF53335">
    <property type="entry name" value="S-adenosyl-L-methionine-dependent methyltransferases"/>
    <property type="match status" value="1"/>
</dbReference>
<dbReference type="PROSITE" id="PS51687">
    <property type="entry name" value="SAM_MT_RNA_M5U"/>
    <property type="match status" value="1"/>
</dbReference>
<dbReference type="PROSITE" id="PS01230">
    <property type="entry name" value="TRMA_1"/>
    <property type="match status" value="1"/>
</dbReference>
<reference key="1">
    <citation type="journal article" date="2008" name="BMC Genomics">
        <title>Genomics of an extreme psychrophile, Psychromonas ingrahamii.</title>
        <authorList>
            <person name="Riley M."/>
            <person name="Staley J.T."/>
            <person name="Danchin A."/>
            <person name="Wang T.Z."/>
            <person name="Brettin T.S."/>
            <person name="Hauser L.J."/>
            <person name="Land M.L."/>
            <person name="Thompson L.S."/>
        </authorList>
    </citation>
    <scope>NUCLEOTIDE SEQUENCE [LARGE SCALE GENOMIC DNA]</scope>
    <source>
        <strain>DSM 17664 / CCUG 51855 / 37</strain>
    </source>
</reference>
<keyword id="KW-0489">Methyltransferase</keyword>
<keyword id="KW-1185">Reference proteome</keyword>
<keyword id="KW-0949">S-adenosyl-L-methionine</keyword>
<keyword id="KW-0808">Transferase</keyword>
<keyword id="KW-0819">tRNA processing</keyword>
<proteinExistence type="inferred from homology"/>
<comment type="function">
    <text evidence="1">Dual-specificity methyltransferase that catalyzes the formation of 5-methyluridine at position 54 (m5U54) in all tRNAs, and that of position 341 (m5U341) in tmRNA (transfer-mRNA).</text>
</comment>
<comment type="catalytic activity">
    <reaction evidence="1">
        <text>uridine(54) in tRNA + S-adenosyl-L-methionine = 5-methyluridine(54) in tRNA + S-adenosyl-L-homocysteine + H(+)</text>
        <dbReference type="Rhea" id="RHEA:42712"/>
        <dbReference type="Rhea" id="RHEA-COMP:10167"/>
        <dbReference type="Rhea" id="RHEA-COMP:10193"/>
        <dbReference type="ChEBI" id="CHEBI:15378"/>
        <dbReference type="ChEBI" id="CHEBI:57856"/>
        <dbReference type="ChEBI" id="CHEBI:59789"/>
        <dbReference type="ChEBI" id="CHEBI:65315"/>
        <dbReference type="ChEBI" id="CHEBI:74447"/>
        <dbReference type="EC" id="2.1.1.35"/>
    </reaction>
</comment>
<comment type="catalytic activity">
    <reaction evidence="1">
        <text>uridine(341) in tmRNA + S-adenosyl-L-methionine = 5-methyluridine(341) in tmRNA + S-adenosyl-L-homocysteine + H(+)</text>
        <dbReference type="Rhea" id="RHEA:43612"/>
        <dbReference type="Rhea" id="RHEA-COMP:10630"/>
        <dbReference type="Rhea" id="RHEA-COMP:10631"/>
        <dbReference type="ChEBI" id="CHEBI:15378"/>
        <dbReference type="ChEBI" id="CHEBI:57856"/>
        <dbReference type="ChEBI" id="CHEBI:59789"/>
        <dbReference type="ChEBI" id="CHEBI:65315"/>
        <dbReference type="ChEBI" id="CHEBI:74447"/>
    </reaction>
</comment>
<comment type="similarity">
    <text evidence="1">Belongs to the class I-like SAM-binding methyltransferase superfamily. RNA M5U methyltransferase family. TrmA subfamily.</text>
</comment>